<keyword id="KW-0067">ATP-binding</keyword>
<keyword id="KW-0436">Ligase</keyword>
<keyword id="KW-0460">Magnesium</keyword>
<keyword id="KW-0479">Metal-binding</keyword>
<keyword id="KW-0520">NAD</keyword>
<keyword id="KW-0547">Nucleotide-binding</keyword>
<sequence length="275" mass="29892">MHAVQRQIAEQLKVQPPFADQNALQAEVARRVNFIKECLQNARLKTLVLGISGGVDSLTAGLLAQRAVKELRESTGDNAYRFIAVRLPYVVQADEHEAQASVDFIEPDERHTINIGSSVKALAAEVKAFDGLPATSVDFVLGNTKARMRMVAQYTVAGAYHGLVIGTDHAAEAVMGFFTKFGDGACDLAPLSGLVKNQVRAIARHFGAPESLVEKVPTADLEDLSPGKPDEASHGVTYAEIDAFLHGEPVREEAFRIICETYAKTQHKRELPYAP</sequence>
<accession>Q4ZYV8</accession>
<comment type="function">
    <text evidence="1">Catalyzes the ATP-dependent amidation of deamido-NAD to form NAD. Uses ammonia as a nitrogen source.</text>
</comment>
<comment type="catalytic activity">
    <reaction evidence="1">
        <text>deamido-NAD(+) + NH4(+) + ATP = AMP + diphosphate + NAD(+) + H(+)</text>
        <dbReference type="Rhea" id="RHEA:21188"/>
        <dbReference type="ChEBI" id="CHEBI:15378"/>
        <dbReference type="ChEBI" id="CHEBI:28938"/>
        <dbReference type="ChEBI" id="CHEBI:30616"/>
        <dbReference type="ChEBI" id="CHEBI:33019"/>
        <dbReference type="ChEBI" id="CHEBI:57540"/>
        <dbReference type="ChEBI" id="CHEBI:58437"/>
        <dbReference type="ChEBI" id="CHEBI:456215"/>
        <dbReference type="EC" id="6.3.1.5"/>
    </reaction>
</comment>
<comment type="pathway">
    <text evidence="1">Cofactor biosynthesis; NAD(+) biosynthesis; NAD(+) from deamido-NAD(+) (ammonia route): step 1/1.</text>
</comment>
<comment type="subunit">
    <text evidence="1">Homodimer.</text>
</comment>
<comment type="similarity">
    <text evidence="1">Belongs to the NAD synthetase family.</text>
</comment>
<feature type="chain" id="PRO_1000077589" description="NH(3)-dependent NAD(+) synthetase">
    <location>
        <begin position="1"/>
        <end position="275"/>
    </location>
</feature>
<feature type="binding site" evidence="1">
    <location>
        <begin position="50"/>
        <end position="57"/>
    </location>
    <ligand>
        <name>ATP</name>
        <dbReference type="ChEBI" id="CHEBI:30616"/>
    </ligand>
</feature>
<feature type="binding site" evidence="1">
    <location>
        <position position="56"/>
    </location>
    <ligand>
        <name>Mg(2+)</name>
        <dbReference type="ChEBI" id="CHEBI:18420"/>
    </ligand>
</feature>
<feature type="binding site" evidence="1">
    <location>
        <position position="147"/>
    </location>
    <ligand>
        <name>deamido-NAD(+)</name>
        <dbReference type="ChEBI" id="CHEBI:58437"/>
    </ligand>
</feature>
<feature type="binding site" evidence="1">
    <location>
        <position position="167"/>
    </location>
    <ligand>
        <name>ATP</name>
        <dbReference type="ChEBI" id="CHEBI:30616"/>
    </ligand>
</feature>
<feature type="binding site" evidence="1">
    <location>
        <position position="172"/>
    </location>
    <ligand>
        <name>Mg(2+)</name>
        <dbReference type="ChEBI" id="CHEBI:18420"/>
    </ligand>
</feature>
<feature type="binding site" evidence="1">
    <location>
        <position position="180"/>
    </location>
    <ligand>
        <name>deamido-NAD(+)</name>
        <dbReference type="ChEBI" id="CHEBI:58437"/>
    </ligand>
</feature>
<feature type="binding site" evidence="1">
    <location>
        <position position="187"/>
    </location>
    <ligand>
        <name>deamido-NAD(+)</name>
        <dbReference type="ChEBI" id="CHEBI:58437"/>
    </ligand>
</feature>
<feature type="binding site" evidence="1">
    <location>
        <position position="196"/>
    </location>
    <ligand>
        <name>ATP</name>
        <dbReference type="ChEBI" id="CHEBI:30616"/>
    </ligand>
</feature>
<feature type="binding site" evidence="1">
    <location>
        <position position="218"/>
    </location>
    <ligand>
        <name>ATP</name>
        <dbReference type="ChEBI" id="CHEBI:30616"/>
    </ligand>
</feature>
<feature type="binding site" evidence="1">
    <location>
        <begin position="267"/>
        <end position="268"/>
    </location>
    <ligand>
        <name>deamido-NAD(+)</name>
        <dbReference type="ChEBI" id="CHEBI:58437"/>
    </ligand>
</feature>
<organism>
    <name type="scientific">Pseudomonas syringae pv. syringae (strain B728a)</name>
    <dbReference type="NCBI Taxonomy" id="205918"/>
    <lineage>
        <taxon>Bacteria</taxon>
        <taxon>Pseudomonadati</taxon>
        <taxon>Pseudomonadota</taxon>
        <taxon>Gammaproteobacteria</taxon>
        <taxon>Pseudomonadales</taxon>
        <taxon>Pseudomonadaceae</taxon>
        <taxon>Pseudomonas</taxon>
        <taxon>Pseudomonas syringae</taxon>
    </lineage>
</organism>
<name>NADE_PSEU2</name>
<evidence type="ECO:0000255" key="1">
    <source>
        <dbReference type="HAMAP-Rule" id="MF_00193"/>
    </source>
</evidence>
<gene>
    <name evidence="1" type="primary">nadE</name>
    <name type="ordered locus">Psyr_0594</name>
</gene>
<protein>
    <recommendedName>
        <fullName evidence="1">NH(3)-dependent NAD(+) synthetase</fullName>
        <ecNumber evidence="1">6.3.1.5</ecNumber>
    </recommendedName>
</protein>
<dbReference type="EC" id="6.3.1.5" evidence="1"/>
<dbReference type="EMBL" id="CP000075">
    <property type="protein sequence ID" value="AAY35664.1"/>
    <property type="molecule type" value="Genomic_DNA"/>
</dbReference>
<dbReference type="RefSeq" id="WP_003317217.1">
    <property type="nucleotide sequence ID" value="NC_007005.1"/>
</dbReference>
<dbReference type="RefSeq" id="YP_233702.1">
    <property type="nucleotide sequence ID" value="NC_007005.1"/>
</dbReference>
<dbReference type="SMR" id="Q4ZYV8"/>
<dbReference type="STRING" id="205918.Psyr_0594"/>
<dbReference type="GeneID" id="77276518"/>
<dbReference type="KEGG" id="psb:Psyr_0594"/>
<dbReference type="PATRIC" id="fig|205918.7.peg.617"/>
<dbReference type="eggNOG" id="COG0171">
    <property type="taxonomic scope" value="Bacteria"/>
</dbReference>
<dbReference type="HOGENOM" id="CLU_059327_3_0_6"/>
<dbReference type="OrthoDB" id="3266517at2"/>
<dbReference type="UniPathway" id="UPA00253">
    <property type="reaction ID" value="UER00333"/>
</dbReference>
<dbReference type="Proteomes" id="UP000000426">
    <property type="component" value="Chromosome"/>
</dbReference>
<dbReference type="GO" id="GO:0005737">
    <property type="term" value="C:cytoplasm"/>
    <property type="evidence" value="ECO:0007669"/>
    <property type="project" value="InterPro"/>
</dbReference>
<dbReference type="GO" id="GO:0005524">
    <property type="term" value="F:ATP binding"/>
    <property type="evidence" value="ECO:0007669"/>
    <property type="project" value="UniProtKB-UniRule"/>
</dbReference>
<dbReference type="GO" id="GO:0004359">
    <property type="term" value="F:glutaminase activity"/>
    <property type="evidence" value="ECO:0007669"/>
    <property type="project" value="InterPro"/>
</dbReference>
<dbReference type="GO" id="GO:0046872">
    <property type="term" value="F:metal ion binding"/>
    <property type="evidence" value="ECO:0007669"/>
    <property type="project" value="UniProtKB-KW"/>
</dbReference>
<dbReference type="GO" id="GO:0003952">
    <property type="term" value="F:NAD+ synthase (glutamine-hydrolyzing) activity"/>
    <property type="evidence" value="ECO:0007669"/>
    <property type="project" value="InterPro"/>
</dbReference>
<dbReference type="GO" id="GO:0008795">
    <property type="term" value="F:NAD+ synthase activity"/>
    <property type="evidence" value="ECO:0007669"/>
    <property type="project" value="UniProtKB-UniRule"/>
</dbReference>
<dbReference type="GO" id="GO:0009435">
    <property type="term" value="P:NAD biosynthetic process"/>
    <property type="evidence" value="ECO:0007669"/>
    <property type="project" value="UniProtKB-UniRule"/>
</dbReference>
<dbReference type="CDD" id="cd00553">
    <property type="entry name" value="NAD_synthase"/>
    <property type="match status" value="1"/>
</dbReference>
<dbReference type="Gene3D" id="3.40.50.620">
    <property type="entry name" value="HUPs"/>
    <property type="match status" value="1"/>
</dbReference>
<dbReference type="HAMAP" id="MF_00193">
    <property type="entry name" value="NadE_ammonia_dep"/>
    <property type="match status" value="1"/>
</dbReference>
<dbReference type="InterPro" id="IPR022310">
    <property type="entry name" value="NAD/GMP_synthase"/>
</dbReference>
<dbReference type="InterPro" id="IPR003694">
    <property type="entry name" value="NAD_synthase"/>
</dbReference>
<dbReference type="InterPro" id="IPR022926">
    <property type="entry name" value="NH(3)-dep_NAD(+)_synth"/>
</dbReference>
<dbReference type="InterPro" id="IPR014729">
    <property type="entry name" value="Rossmann-like_a/b/a_fold"/>
</dbReference>
<dbReference type="NCBIfam" id="TIGR00552">
    <property type="entry name" value="nadE"/>
    <property type="match status" value="1"/>
</dbReference>
<dbReference type="NCBIfam" id="NF001979">
    <property type="entry name" value="PRK00768.1"/>
    <property type="match status" value="1"/>
</dbReference>
<dbReference type="PANTHER" id="PTHR23090">
    <property type="entry name" value="NH 3 /GLUTAMINE-DEPENDENT NAD + SYNTHETASE"/>
    <property type="match status" value="1"/>
</dbReference>
<dbReference type="PANTHER" id="PTHR23090:SF7">
    <property type="entry name" value="NH(3)-DEPENDENT NAD(+) SYNTHETASE"/>
    <property type="match status" value="1"/>
</dbReference>
<dbReference type="Pfam" id="PF02540">
    <property type="entry name" value="NAD_synthase"/>
    <property type="match status" value="1"/>
</dbReference>
<dbReference type="SUPFAM" id="SSF52402">
    <property type="entry name" value="Adenine nucleotide alpha hydrolases-like"/>
    <property type="match status" value="1"/>
</dbReference>
<reference key="1">
    <citation type="journal article" date="2005" name="Proc. Natl. Acad. Sci. U.S.A.">
        <title>Comparison of the complete genome sequences of Pseudomonas syringae pv. syringae B728a and pv. tomato DC3000.</title>
        <authorList>
            <person name="Feil H."/>
            <person name="Feil W.S."/>
            <person name="Chain P."/>
            <person name="Larimer F."/>
            <person name="Dibartolo G."/>
            <person name="Copeland A."/>
            <person name="Lykidis A."/>
            <person name="Trong S."/>
            <person name="Nolan M."/>
            <person name="Goltsman E."/>
            <person name="Thiel J."/>
            <person name="Malfatti S."/>
            <person name="Loper J.E."/>
            <person name="Lapidus A."/>
            <person name="Detter J.C."/>
            <person name="Land M."/>
            <person name="Richardson P.M."/>
            <person name="Kyrpides N.C."/>
            <person name="Ivanova N."/>
            <person name="Lindow S.E."/>
        </authorList>
    </citation>
    <scope>NUCLEOTIDE SEQUENCE [LARGE SCALE GENOMIC DNA]</scope>
    <source>
        <strain>B728a</strain>
    </source>
</reference>
<proteinExistence type="inferred from homology"/>